<organism>
    <name type="scientific">Arabidopsis thaliana</name>
    <name type="common">Mouse-ear cress</name>
    <dbReference type="NCBI Taxonomy" id="3702"/>
    <lineage>
        <taxon>Eukaryota</taxon>
        <taxon>Viridiplantae</taxon>
        <taxon>Streptophyta</taxon>
        <taxon>Embryophyta</taxon>
        <taxon>Tracheophyta</taxon>
        <taxon>Spermatophyta</taxon>
        <taxon>Magnoliopsida</taxon>
        <taxon>eudicotyledons</taxon>
        <taxon>Gunneridae</taxon>
        <taxon>Pentapetalae</taxon>
        <taxon>rosids</taxon>
        <taxon>malvids</taxon>
        <taxon>Brassicales</taxon>
        <taxon>Brassicaceae</taxon>
        <taxon>Camelineae</taxon>
        <taxon>Arabidopsis</taxon>
    </lineage>
</organism>
<proteinExistence type="evidence at protein level"/>
<reference key="1">
    <citation type="journal article" date="1992" name="Proc. Natl. Acad. Sci. U.S.A.">
        <title>Brain proteins in plants: an Arabidopsis homolog to neurotransmitter pathway activators is part of a DNA binding complex.</title>
        <authorList>
            <person name="Lu G."/>
            <person name="Delisle A.J."/>
            <person name="de Vetten N.C."/>
            <person name="Ferl R.J."/>
        </authorList>
    </citation>
    <scope>NUCLEOTIDE SEQUENCE [MRNA]</scope>
    <source>
        <strain>cv. Columbia</strain>
    </source>
</reference>
<reference key="2">
    <citation type="journal article" date="1995" name="Plant Physiol.">
        <title>Sequences of three Arabidopsis general regulatory factor genes encoding GF14 (14-3-3) proteins.</title>
        <authorList>
            <person name="Rooney M.F."/>
            <person name="Ferl R.J."/>
        </authorList>
    </citation>
    <scope>NUCLEOTIDE SEQUENCE [GENOMIC DNA]</scope>
    <source>
        <strain>cv. Columbia</strain>
    </source>
</reference>
<reference key="3">
    <citation type="journal article" date="2000" name="Nature">
        <title>Sequence and analysis of chromosome 1 of the plant Arabidopsis thaliana.</title>
        <authorList>
            <person name="Theologis A."/>
            <person name="Ecker J.R."/>
            <person name="Palm C.J."/>
            <person name="Federspiel N.A."/>
            <person name="Kaul S."/>
            <person name="White O."/>
            <person name="Alonso J."/>
            <person name="Altafi H."/>
            <person name="Araujo R."/>
            <person name="Bowman C.L."/>
            <person name="Brooks S.Y."/>
            <person name="Buehler E."/>
            <person name="Chan A."/>
            <person name="Chao Q."/>
            <person name="Chen H."/>
            <person name="Cheuk R.F."/>
            <person name="Chin C.W."/>
            <person name="Chung M.K."/>
            <person name="Conn L."/>
            <person name="Conway A.B."/>
            <person name="Conway A.R."/>
            <person name="Creasy T.H."/>
            <person name="Dewar K."/>
            <person name="Dunn P."/>
            <person name="Etgu P."/>
            <person name="Feldblyum T.V."/>
            <person name="Feng J.-D."/>
            <person name="Fong B."/>
            <person name="Fujii C.Y."/>
            <person name="Gill J.E."/>
            <person name="Goldsmith A.D."/>
            <person name="Haas B."/>
            <person name="Hansen N.F."/>
            <person name="Hughes B."/>
            <person name="Huizar L."/>
            <person name="Hunter J.L."/>
            <person name="Jenkins J."/>
            <person name="Johnson-Hopson C."/>
            <person name="Khan S."/>
            <person name="Khaykin E."/>
            <person name="Kim C.J."/>
            <person name="Koo H.L."/>
            <person name="Kremenetskaia I."/>
            <person name="Kurtz D.B."/>
            <person name="Kwan A."/>
            <person name="Lam B."/>
            <person name="Langin-Hooper S."/>
            <person name="Lee A."/>
            <person name="Lee J.M."/>
            <person name="Lenz C.A."/>
            <person name="Li J.H."/>
            <person name="Li Y.-P."/>
            <person name="Lin X."/>
            <person name="Liu S.X."/>
            <person name="Liu Z.A."/>
            <person name="Luros J.S."/>
            <person name="Maiti R."/>
            <person name="Marziali A."/>
            <person name="Militscher J."/>
            <person name="Miranda M."/>
            <person name="Nguyen M."/>
            <person name="Nierman W.C."/>
            <person name="Osborne B.I."/>
            <person name="Pai G."/>
            <person name="Peterson J."/>
            <person name="Pham P.K."/>
            <person name="Rizzo M."/>
            <person name="Rooney T."/>
            <person name="Rowley D."/>
            <person name="Sakano H."/>
            <person name="Salzberg S.L."/>
            <person name="Schwartz J.R."/>
            <person name="Shinn P."/>
            <person name="Southwick A.M."/>
            <person name="Sun H."/>
            <person name="Tallon L.J."/>
            <person name="Tambunga G."/>
            <person name="Toriumi M.J."/>
            <person name="Town C.D."/>
            <person name="Utterback T."/>
            <person name="Van Aken S."/>
            <person name="Vaysberg M."/>
            <person name="Vysotskaia V.S."/>
            <person name="Walker M."/>
            <person name="Wu D."/>
            <person name="Yu G."/>
            <person name="Fraser C.M."/>
            <person name="Venter J.C."/>
            <person name="Davis R.W."/>
        </authorList>
    </citation>
    <scope>NUCLEOTIDE SEQUENCE [LARGE SCALE GENOMIC DNA]</scope>
    <source>
        <strain>cv. Columbia</strain>
    </source>
</reference>
<reference key="4">
    <citation type="journal article" date="2017" name="Plant J.">
        <title>Araport11: a complete reannotation of the Arabidopsis thaliana reference genome.</title>
        <authorList>
            <person name="Cheng C.Y."/>
            <person name="Krishnakumar V."/>
            <person name="Chan A.P."/>
            <person name="Thibaud-Nissen F."/>
            <person name="Schobel S."/>
            <person name="Town C.D."/>
        </authorList>
    </citation>
    <scope>GENOME REANNOTATION</scope>
    <source>
        <strain>cv. Columbia</strain>
    </source>
</reference>
<reference key="5">
    <citation type="journal article" date="2003" name="Science">
        <title>Empirical analysis of transcriptional activity in the Arabidopsis genome.</title>
        <authorList>
            <person name="Yamada K."/>
            <person name="Lim J."/>
            <person name="Dale J.M."/>
            <person name="Chen H."/>
            <person name="Shinn P."/>
            <person name="Palm C.J."/>
            <person name="Southwick A.M."/>
            <person name="Wu H.C."/>
            <person name="Kim C.J."/>
            <person name="Nguyen M."/>
            <person name="Pham P.K."/>
            <person name="Cheuk R.F."/>
            <person name="Karlin-Newmann G."/>
            <person name="Liu S.X."/>
            <person name="Lam B."/>
            <person name="Sakano H."/>
            <person name="Wu T."/>
            <person name="Yu G."/>
            <person name="Miranda M."/>
            <person name="Quach H.L."/>
            <person name="Tripp M."/>
            <person name="Chang C.H."/>
            <person name="Lee J.M."/>
            <person name="Toriumi M.J."/>
            <person name="Chan M.M."/>
            <person name="Tang C.C."/>
            <person name="Onodera C.S."/>
            <person name="Deng J.M."/>
            <person name="Akiyama K."/>
            <person name="Ansari Y."/>
            <person name="Arakawa T."/>
            <person name="Banh J."/>
            <person name="Banno F."/>
            <person name="Bowser L."/>
            <person name="Brooks S.Y."/>
            <person name="Carninci P."/>
            <person name="Chao Q."/>
            <person name="Choy N."/>
            <person name="Enju A."/>
            <person name="Goldsmith A.D."/>
            <person name="Gurjal M."/>
            <person name="Hansen N.F."/>
            <person name="Hayashizaki Y."/>
            <person name="Johnson-Hopson C."/>
            <person name="Hsuan V.W."/>
            <person name="Iida K."/>
            <person name="Karnes M."/>
            <person name="Khan S."/>
            <person name="Koesema E."/>
            <person name="Ishida J."/>
            <person name="Jiang P.X."/>
            <person name="Jones T."/>
            <person name="Kawai J."/>
            <person name="Kamiya A."/>
            <person name="Meyers C."/>
            <person name="Nakajima M."/>
            <person name="Narusaka M."/>
            <person name="Seki M."/>
            <person name="Sakurai T."/>
            <person name="Satou M."/>
            <person name="Tamse R."/>
            <person name="Vaysberg M."/>
            <person name="Wallender E.K."/>
            <person name="Wong C."/>
            <person name="Yamamura Y."/>
            <person name="Yuan S."/>
            <person name="Shinozaki K."/>
            <person name="Davis R.W."/>
            <person name="Theologis A."/>
            <person name="Ecker J.R."/>
        </authorList>
    </citation>
    <scope>NUCLEOTIDE SEQUENCE [LARGE SCALE MRNA]</scope>
    <source>
        <strain>cv. Columbia</strain>
    </source>
</reference>
<reference key="6">
    <citation type="submission" date="2002-03" db="EMBL/GenBank/DDBJ databases">
        <title>Full-length cDNA from Arabidopsis thaliana.</title>
        <authorList>
            <person name="Brover V.V."/>
            <person name="Troukhan M.E."/>
            <person name="Alexandrov N.A."/>
            <person name="Lu Y.-P."/>
            <person name="Flavell R.B."/>
            <person name="Feldmann K.A."/>
        </authorList>
    </citation>
    <scope>NUCLEOTIDE SEQUENCE [LARGE SCALE MRNA]</scope>
</reference>
<reference key="7">
    <citation type="journal article" date="2014" name="Plant J.">
        <title>Light modulated activity of root alkaline/neutral invertase involves the interaction with 14-3-3 proteins.</title>
        <authorList>
            <person name="Gao J."/>
            <person name="van Kleeff P.J."/>
            <person name="Oecking C."/>
            <person name="Li K.W."/>
            <person name="Erban A."/>
            <person name="Kopka J."/>
            <person name="Hincha D.K."/>
            <person name="de Boer A.H."/>
        </authorList>
    </citation>
    <scope>INTERACTION WITH CINV1</scope>
</reference>
<evidence type="ECO:0000250" key="1">
    <source>
        <dbReference type="UniProtKB" id="P48349"/>
    </source>
</evidence>
<evidence type="ECO:0000269" key="2">
    <source>
    </source>
</evidence>
<evidence type="ECO:0000305" key="3"/>
<evidence type="ECO:0007829" key="4">
    <source>
        <dbReference type="PDB" id="8QTF"/>
    </source>
</evidence>
<feature type="chain" id="PRO_0000058664" description="14-3-3-like protein GF14 omega">
    <location>
        <begin position="1"/>
        <end position="259"/>
    </location>
</feature>
<feature type="modified residue" description="Phosphoserine" evidence="1">
    <location>
        <position position="67"/>
    </location>
</feature>
<feature type="modified residue" description="Phosphoserine" evidence="1">
    <location>
        <position position="109"/>
    </location>
</feature>
<feature type="modified residue" description="Phosphoserine" evidence="1">
    <location>
        <position position="190"/>
    </location>
</feature>
<feature type="modified residue" description="Phosphothreonine" evidence="1">
    <location>
        <position position="211"/>
    </location>
</feature>
<feature type="sequence conflict" description="In Ref. 2; AAA96253." evidence="3" ref="2">
    <original>F</original>
    <variation>L</variation>
    <location>
        <position position="8"/>
    </location>
</feature>
<feature type="helix" evidence="4">
    <location>
        <begin position="5"/>
        <end position="17"/>
    </location>
</feature>
<feature type="helix" evidence="4">
    <location>
        <begin position="21"/>
        <end position="34"/>
    </location>
</feature>
<feature type="strand" evidence="4">
    <location>
        <begin position="35"/>
        <end position="38"/>
    </location>
</feature>
<feature type="helix" evidence="4">
    <location>
        <begin position="42"/>
        <end position="75"/>
    </location>
</feature>
<feature type="helix" evidence="4">
    <location>
        <begin position="79"/>
        <end position="109"/>
    </location>
</feature>
<feature type="helix" evidence="4">
    <location>
        <begin position="111"/>
        <end position="114"/>
    </location>
</feature>
<feature type="helix" evidence="4">
    <location>
        <begin position="118"/>
        <end position="138"/>
    </location>
</feature>
<feature type="helix" evidence="4">
    <location>
        <begin position="141"/>
        <end position="165"/>
    </location>
</feature>
<feature type="helix" evidence="4">
    <location>
        <begin position="171"/>
        <end position="186"/>
    </location>
</feature>
<feature type="helix" evidence="4">
    <location>
        <begin position="191"/>
        <end position="207"/>
    </location>
</feature>
<feature type="turn" evidence="4">
    <location>
        <begin position="208"/>
        <end position="210"/>
    </location>
</feature>
<feature type="helix" evidence="4">
    <location>
        <begin position="215"/>
        <end position="235"/>
    </location>
</feature>
<sequence>MASGREEFVYMAKLAEQAERYEEMVEFMEKVSAAVDGDELTVEERNLLSVAYKNVIGARRASWRIISSIEQKEESRGNDDHVTAIREYRSKIETELSGICDGILKLLDSRLIPAAASGDSKVFYLKMKGDYHRYLAEFKTGQERKDAAEHTLAAYKSAQDIANAELAPTHPIRLGLALNFSVFYYEILNSPDRACNLAKQAFDEAIAELDTLGEESYKDSTLIMQLLRDNLTLWTSDMQDDAADEIKEAAAPKPTEEQQ</sequence>
<keyword id="KW-0002">3D-structure</keyword>
<keyword id="KW-0963">Cytoplasm</keyword>
<keyword id="KW-0539">Nucleus</keyword>
<keyword id="KW-0597">Phosphoprotein</keyword>
<keyword id="KW-1185">Reference proteome</keyword>
<protein>
    <recommendedName>
        <fullName>14-3-3-like protein GF14 omega</fullName>
    </recommendedName>
    <alternativeName>
        <fullName>General regulatory factor 2</fullName>
    </alternativeName>
</protein>
<accession>Q01525</accession>
<name>14332_ARATH</name>
<gene>
    <name type="primary">GRF2</name>
    <name type="synonym">GF14</name>
    <name type="ordered locus">At1g78300</name>
    <name type="ORF">F3F9.16</name>
</gene>
<dbReference type="EMBL" id="M96855">
    <property type="protein sequence ID" value="AAA32798.1"/>
    <property type="molecule type" value="mRNA"/>
</dbReference>
<dbReference type="EMBL" id="U09376">
    <property type="protein sequence ID" value="AAA96253.1"/>
    <property type="molecule type" value="Genomic_DNA"/>
</dbReference>
<dbReference type="EMBL" id="AC013430">
    <property type="protein sequence ID" value="AAF71808.1"/>
    <property type="molecule type" value="Genomic_DNA"/>
</dbReference>
<dbReference type="EMBL" id="CP002684">
    <property type="protein sequence ID" value="AEE36093.1"/>
    <property type="molecule type" value="Genomic_DNA"/>
</dbReference>
<dbReference type="EMBL" id="AF462807">
    <property type="protein sequence ID" value="AAL58901.1"/>
    <property type="molecule type" value="mRNA"/>
</dbReference>
<dbReference type="EMBL" id="AY077667">
    <property type="protein sequence ID" value="AAL76145.1"/>
    <property type="molecule type" value="mRNA"/>
</dbReference>
<dbReference type="EMBL" id="AY086467">
    <property type="protein sequence ID" value="AAM67316.1"/>
    <property type="molecule type" value="mRNA"/>
</dbReference>
<dbReference type="PIR" id="A47237">
    <property type="entry name" value="A47237"/>
</dbReference>
<dbReference type="RefSeq" id="NP_565176.1">
    <property type="nucleotide sequence ID" value="NM_106479.3"/>
</dbReference>
<dbReference type="PDB" id="8QTC">
    <property type="method" value="X-ray"/>
    <property type="resolution" value="3.50 A"/>
    <property type="chains" value="A/B=1-240"/>
</dbReference>
<dbReference type="PDB" id="8QTF">
    <property type="method" value="X-ray"/>
    <property type="resolution" value="1.90 A"/>
    <property type="chains" value="A/B/C/D/E/F/G/H/I/J=1-240"/>
</dbReference>
<dbReference type="PDB" id="8QTT">
    <property type="method" value="X-ray"/>
    <property type="resolution" value="2.35 A"/>
    <property type="chains" value="A/B/C/D/E/F/G/H/I/J=1-237"/>
</dbReference>
<dbReference type="PDBsum" id="8QTC"/>
<dbReference type="PDBsum" id="8QTF"/>
<dbReference type="PDBsum" id="8QTT"/>
<dbReference type="SMR" id="Q01525"/>
<dbReference type="BioGRID" id="29384">
    <property type="interactions" value="161"/>
</dbReference>
<dbReference type="FunCoup" id="Q01525">
    <property type="interactions" value="3315"/>
</dbReference>
<dbReference type="IntAct" id="Q01525">
    <property type="interactions" value="136"/>
</dbReference>
<dbReference type="STRING" id="3702.Q01525"/>
<dbReference type="iPTMnet" id="Q01525"/>
<dbReference type="PaxDb" id="3702-AT1G78300.1"/>
<dbReference type="ProteomicsDB" id="244572"/>
<dbReference type="EnsemblPlants" id="AT1G78300.1">
    <property type="protein sequence ID" value="AT1G78300.1"/>
    <property type="gene ID" value="AT1G78300"/>
</dbReference>
<dbReference type="GeneID" id="844165"/>
<dbReference type="Gramene" id="AT1G78300.1">
    <property type="protein sequence ID" value="AT1G78300.1"/>
    <property type="gene ID" value="AT1G78300"/>
</dbReference>
<dbReference type="KEGG" id="ath:AT1G78300"/>
<dbReference type="Araport" id="AT1G78300"/>
<dbReference type="TAIR" id="AT1G78300">
    <property type="gene designation" value="GRF2"/>
</dbReference>
<dbReference type="eggNOG" id="KOG0841">
    <property type="taxonomic scope" value="Eukaryota"/>
</dbReference>
<dbReference type="HOGENOM" id="CLU_058290_0_0_1"/>
<dbReference type="InParanoid" id="Q01525"/>
<dbReference type="OMA" id="KGCQLAR"/>
<dbReference type="OrthoDB" id="10260625at2759"/>
<dbReference type="PhylomeDB" id="Q01525"/>
<dbReference type="CD-CODE" id="4299E36E">
    <property type="entry name" value="Nucleolus"/>
</dbReference>
<dbReference type="PRO" id="PR:Q01525"/>
<dbReference type="Proteomes" id="UP000006548">
    <property type="component" value="Chromosome 1"/>
</dbReference>
<dbReference type="ExpressionAtlas" id="Q01525">
    <property type="expression patterns" value="baseline and differential"/>
</dbReference>
<dbReference type="GO" id="GO:0005829">
    <property type="term" value="C:cytosol"/>
    <property type="evidence" value="ECO:0007005"/>
    <property type="project" value="TAIR"/>
</dbReference>
<dbReference type="GO" id="GO:0005794">
    <property type="term" value="C:Golgi apparatus"/>
    <property type="evidence" value="ECO:0007005"/>
    <property type="project" value="TAIR"/>
</dbReference>
<dbReference type="GO" id="GO:0005739">
    <property type="term" value="C:mitochondrion"/>
    <property type="evidence" value="ECO:0007005"/>
    <property type="project" value="TAIR"/>
</dbReference>
<dbReference type="GO" id="GO:0005634">
    <property type="term" value="C:nucleus"/>
    <property type="evidence" value="ECO:0007669"/>
    <property type="project" value="UniProtKB-SubCell"/>
</dbReference>
<dbReference type="GO" id="GO:0000325">
    <property type="term" value="C:plant-type vacuole"/>
    <property type="evidence" value="ECO:0007005"/>
    <property type="project" value="TAIR"/>
</dbReference>
<dbReference type="GO" id="GO:0009742">
    <property type="term" value="P:brassinosteroid mediated signaling pathway"/>
    <property type="evidence" value="ECO:0000353"/>
    <property type="project" value="TAIR"/>
</dbReference>
<dbReference type="FunFam" id="1.20.190.20:FF:000002">
    <property type="entry name" value="14-3-3 protein epsilon"/>
    <property type="match status" value="1"/>
</dbReference>
<dbReference type="Gene3D" id="1.20.190.20">
    <property type="entry name" value="14-3-3 domain"/>
    <property type="match status" value="1"/>
</dbReference>
<dbReference type="InterPro" id="IPR000308">
    <property type="entry name" value="14-3-3"/>
</dbReference>
<dbReference type="InterPro" id="IPR023409">
    <property type="entry name" value="14-3-3_CS"/>
</dbReference>
<dbReference type="InterPro" id="IPR036815">
    <property type="entry name" value="14-3-3_dom_sf"/>
</dbReference>
<dbReference type="InterPro" id="IPR023410">
    <property type="entry name" value="14-3-3_domain"/>
</dbReference>
<dbReference type="PANTHER" id="PTHR18860">
    <property type="entry name" value="14-3-3 PROTEIN"/>
    <property type="match status" value="1"/>
</dbReference>
<dbReference type="Pfam" id="PF00244">
    <property type="entry name" value="14-3-3"/>
    <property type="match status" value="1"/>
</dbReference>
<dbReference type="PIRSF" id="PIRSF000868">
    <property type="entry name" value="14-3-3"/>
    <property type="match status" value="1"/>
</dbReference>
<dbReference type="PRINTS" id="PR00305">
    <property type="entry name" value="1433ZETA"/>
</dbReference>
<dbReference type="SMART" id="SM00101">
    <property type="entry name" value="14_3_3"/>
    <property type="match status" value="1"/>
</dbReference>
<dbReference type="SUPFAM" id="SSF48445">
    <property type="entry name" value="14-3-3 protein"/>
    <property type="match status" value="1"/>
</dbReference>
<dbReference type="PROSITE" id="PS00796">
    <property type="entry name" value="1433_1"/>
    <property type="match status" value="1"/>
</dbReference>
<dbReference type="PROSITE" id="PS00797">
    <property type="entry name" value="1433_2"/>
    <property type="match status" value="1"/>
</dbReference>
<comment type="function">
    <text>Is associated with a DNA binding complex that binds to the G box, a well-characterized cis-acting DNA regulatory element found in plant genes.</text>
</comment>
<comment type="subunit">
    <text evidence="2">Interacts with CINV1.</text>
</comment>
<comment type="subcellular location">
    <subcellularLocation>
        <location evidence="1">Nucleus</location>
    </subcellularLocation>
    <subcellularLocation>
        <location evidence="1">Cytoplasm</location>
    </subcellularLocation>
    <text evidence="1">Translocates from the cytosol to the nucleus when phosphorylated.</text>
</comment>
<comment type="similarity">
    <text evidence="3">Belongs to the 14-3-3 family.</text>
</comment>